<evidence type="ECO:0000255" key="1">
    <source>
        <dbReference type="HAMAP-Rule" id="MF_00828"/>
    </source>
</evidence>
<protein>
    <recommendedName>
        <fullName evidence="1">Photosystem I reaction center subunit XII</fullName>
    </recommendedName>
    <alternativeName>
        <fullName evidence="1">PSI-M</fullName>
    </alternativeName>
</protein>
<sequence length="32" mass="3506">MTLISDSQIVVALVSAFVTGILALRLGRELYR</sequence>
<reference key="1">
    <citation type="journal article" date="2005" name="BMC Biol.">
        <title>The complete chloroplast DNA sequences of the charophycean green algae Staurastrum and Zygnema reveal that the chloroplast genome underwent extensive changes during the evolution of the Zygnematales.</title>
        <authorList>
            <person name="Turmel M."/>
            <person name="Otis C."/>
            <person name="Lemieux C."/>
        </authorList>
    </citation>
    <scope>NUCLEOTIDE SEQUENCE [LARGE SCALE GENOMIC DNA]</scope>
</reference>
<comment type="subcellular location">
    <subcellularLocation>
        <location evidence="1">Plastid</location>
        <location evidence="1">Chloroplast thylakoid membrane</location>
        <topology evidence="1">Single-pass membrane protein</topology>
    </subcellularLocation>
</comment>
<comment type="similarity">
    <text evidence="1">Belongs to the PsaM family.</text>
</comment>
<keyword id="KW-0150">Chloroplast</keyword>
<keyword id="KW-0472">Membrane</keyword>
<keyword id="KW-0602">Photosynthesis</keyword>
<keyword id="KW-0603">Photosystem I</keyword>
<keyword id="KW-0934">Plastid</keyword>
<keyword id="KW-0793">Thylakoid</keyword>
<keyword id="KW-0812">Transmembrane</keyword>
<keyword id="KW-1133">Transmembrane helix</keyword>
<feature type="chain" id="PRO_0000277399" description="Photosystem I reaction center subunit XII">
    <location>
        <begin position="1"/>
        <end position="32"/>
    </location>
</feature>
<feature type="transmembrane region" description="Helical" evidence="1">
    <location>
        <begin position="10"/>
        <end position="27"/>
    </location>
</feature>
<geneLocation type="chloroplast"/>
<accession>Q32RW8</accession>
<proteinExistence type="inferred from homology"/>
<organism>
    <name type="scientific">Staurastrum punctulatum</name>
    <name type="common">Green alga</name>
    <name type="synonym">Cosmoastrum punctulatum</name>
    <dbReference type="NCBI Taxonomy" id="102822"/>
    <lineage>
        <taxon>Eukaryota</taxon>
        <taxon>Viridiplantae</taxon>
        <taxon>Streptophyta</taxon>
        <taxon>Zygnematophyceae</taxon>
        <taxon>Zygnematophycidae</taxon>
        <taxon>Desmidiales</taxon>
        <taxon>Desmidiaceae</taxon>
        <taxon>Staurastrum</taxon>
    </lineage>
</organism>
<gene>
    <name evidence="1" type="primary">psaM</name>
</gene>
<dbReference type="EMBL" id="AY958085">
    <property type="protein sequence ID" value="AAX45720.1"/>
    <property type="molecule type" value="Genomic_DNA"/>
</dbReference>
<dbReference type="RefSeq" id="YP_636408.1">
    <property type="nucleotide sequence ID" value="NC_008116.1"/>
</dbReference>
<dbReference type="SMR" id="Q32RW8"/>
<dbReference type="GeneID" id="4108679"/>
<dbReference type="GO" id="GO:0009535">
    <property type="term" value="C:chloroplast thylakoid membrane"/>
    <property type="evidence" value="ECO:0007669"/>
    <property type="project" value="UniProtKB-SubCell"/>
</dbReference>
<dbReference type="GO" id="GO:0009522">
    <property type="term" value="C:photosystem I"/>
    <property type="evidence" value="ECO:0007669"/>
    <property type="project" value="UniProtKB-KW"/>
</dbReference>
<dbReference type="GO" id="GO:0015979">
    <property type="term" value="P:photosynthesis"/>
    <property type="evidence" value="ECO:0007669"/>
    <property type="project" value="UniProtKB-UniRule"/>
</dbReference>
<dbReference type="HAMAP" id="MF_00828">
    <property type="entry name" value="PSI_PsaM"/>
    <property type="match status" value="1"/>
</dbReference>
<dbReference type="InterPro" id="IPR010010">
    <property type="entry name" value="PSI_PsaM"/>
</dbReference>
<dbReference type="InterPro" id="IPR037279">
    <property type="entry name" value="PSI_PsaM_sf"/>
</dbReference>
<dbReference type="NCBIfam" id="TIGR03053">
    <property type="entry name" value="PS_I_psaM"/>
    <property type="match status" value="1"/>
</dbReference>
<dbReference type="Pfam" id="PF07465">
    <property type="entry name" value="PsaM"/>
    <property type="match status" value="1"/>
</dbReference>
<dbReference type="SUPFAM" id="SSF81548">
    <property type="entry name" value="Subunit XII of photosystem I reaction centre, PsaM"/>
    <property type="match status" value="1"/>
</dbReference>
<name>PSAM_STAPU</name>